<evidence type="ECO:0000255" key="1">
    <source>
        <dbReference type="HAMAP-Rule" id="MF_03058"/>
    </source>
</evidence>
<evidence type="ECO:0000256" key="2">
    <source>
        <dbReference type="SAM" id="MobiDB-lite"/>
    </source>
</evidence>
<proteinExistence type="inferred from homology"/>
<keyword id="KW-0968">Cytoplasmic vesicle</keyword>
<keyword id="KW-0256">Endoplasmic reticulum</keyword>
<keyword id="KW-0472">Membrane</keyword>
<keyword id="KW-1185">Reference proteome</keyword>
<keyword id="KW-0812">Transmembrane</keyword>
<keyword id="KW-1133">Transmembrane helix</keyword>
<feature type="chain" id="PRO_0000377591" description="Vacuolar ATPase assembly integral membrane protein vma21">
    <location>
        <begin position="1"/>
        <end position="107"/>
    </location>
</feature>
<feature type="topological domain" description="Cytoplasmic" evidence="1">
    <location>
        <begin position="1"/>
        <end position="39"/>
    </location>
</feature>
<feature type="transmembrane region" description="Helical" evidence="1">
    <location>
        <begin position="40"/>
        <end position="60"/>
    </location>
</feature>
<feature type="topological domain" description="Lumenal" evidence="1">
    <location>
        <begin position="61"/>
        <end position="68"/>
    </location>
</feature>
<feature type="transmembrane region" description="Helical" evidence="1">
    <location>
        <begin position="69"/>
        <end position="89"/>
    </location>
</feature>
<feature type="topological domain" description="Cytoplasmic" evidence="1">
    <location>
        <begin position="90"/>
        <end position="107"/>
    </location>
</feature>
<feature type="region of interest" description="Disordered" evidence="2">
    <location>
        <begin position="1"/>
        <end position="28"/>
    </location>
</feature>
<feature type="short sequence motif" description="Prevents secretion from ER">
    <location>
        <begin position="104"/>
        <end position="107"/>
    </location>
</feature>
<feature type="compositionally biased region" description="Basic and acidic residues" evidence="2">
    <location>
        <begin position="1"/>
        <end position="11"/>
    </location>
</feature>
<feature type="compositionally biased region" description="Low complexity" evidence="2">
    <location>
        <begin position="12"/>
        <end position="26"/>
    </location>
</feature>
<name>VMA21_NEOFI</name>
<dbReference type="EMBL" id="DS027690">
    <property type="protein sequence ID" value="EAW21701.1"/>
    <property type="molecule type" value="Genomic_DNA"/>
</dbReference>
<dbReference type="RefSeq" id="XP_001263598.1">
    <property type="nucleotide sequence ID" value="XM_001263597.1"/>
</dbReference>
<dbReference type="SMR" id="A1D7K7"/>
<dbReference type="STRING" id="331117.A1D7K7"/>
<dbReference type="EnsemblFungi" id="EAW21701">
    <property type="protein sequence ID" value="EAW21701"/>
    <property type="gene ID" value="NFIA_068710"/>
</dbReference>
<dbReference type="GeneID" id="4590244"/>
<dbReference type="KEGG" id="nfi:NFIA_068710"/>
<dbReference type="VEuPathDB" id="FungiDB:NFIA_068710"/>
<dbReference type="eggNOG" id="ENOG502SBNA">
    <property type="taxonomic scope" value="Eukaryota"/>
</dbReference>
<dbReference type="HOGENOM" id="CLU_154717_1_1_1"/>
<dbReference type="OMA" id="AMKEDQT"/>
<dbReference type="OrthoDB" id="160405at2759"/>
<dbReference type="Proteomes" id="UP000006702">
    <property type="component" value="Unassembled WGS sequence"/>
</dbReference>
<dbReference type="GO" id="GO:0005789">
    <property type="term" value="C:endoplasmic reticulum membrane"/>
    <property type="evidence" value="ECO:0007669"/>
    <property type="project" value="UniProtKB-SubCell"/>
</dbReference>
<dbReference type="GO" id="GO:0033116">
    <property type="term" value="C:endoplasmic reticulum-Golgi intermediate compartment membrane"/>
    <property type="evidence" value="ECO:0007669"/>
    <property type="project" value="UniProtKB-SubCell"/>
</dbReference>
<dbReference type="GO" id="GO:0012507">
    <property type="term" value="C:ER to Golgi transport vesicle membrane"/>
    <property type="evidence" value="ECO:0007669"/>
    <property type="project" value="UniProtKB-SubCell"/>
</dbReference>
<dbReference type="GO" id="GO:0070072">
    <property type="term" value="P:vacuolar proton-transporting V-type ATPase complex assembly"/>
    <property type="evidence" value="ECO:0007669"/>
    <property type="project" value="UniProtKB-UniRule"/>
</dbReference>
<dbReference type="HAMAP" id="MF_03058">
    <property type="entry name" value="VMA21"/>
    <property type="match status" value="1"/>
</dbReference>
<dbReference type="InterPro" id="IPR019013">
    <property type="entry name" value="Vma21"/>
</dbReference>
<dbReference type="PANTHER" id="PTHR31792">
    <property type="entry name" value="VACUOLAR ATPASE ASSEMBLY INTEGRAL MEMBRANE PROTEIN VMA21"/>
    <property type="match status" value="1"/>
</dbReference>
<dbReference type="PANTHER" id="PTHR31792:SF3">
    <property type="entry name" value="VACUOLAR ATPASE ASSEMBLY INTEGRAL MEMBRANE PROTEIN VMA21"/>
    <property type="match status" value="1"/>
</dbReference>
<dbReference type="Pfam" id="PF09446">
    <property type="entry name" value="VMA21"/>
    <property type="match status" value="1"/>
</dbReference>
<accession>A1D7K7</accession>
<gene>
    <name type="primary">vma21</name>
    <name type="ORF">NFIA_068710</name>
</gene>
<comment type="function">
    <text evidence="1">Required for the assembly of the V0 complex of the vacuolar ATPase (V-ATPase) in the endoplasmic reticulum.</text>
</comment>
<comment type="subcellular location">
    <subcellularLocation>
        <location evidence="1">Endoplasmic reticulum membrane</location>
        <topology evidence="1">Multi-pass membrane protein</topology>
    </subcellularLocation>
    <subcellularLocation>
        <location evidence="1">Endoplasmic reticulum-Golgi intermediate compartment membrane</location>
        <topology evidence="1">Multi-pass membrane protein</topology>
    </subcellularLocation>
    <subcellularLocation>
        <location evidence="1">Cytoplasmic vesicle</location>
        <location evidence="1">COPII-coated vesicle membrane</location>
        <topology evidence="1">Multi-pass membrane protein</topology>
    </subcellularLocation>
</comment>
<comment type="similarity">
    <text evidence="1">Belongs to the VMA21 family.</text>
</comment>
<organism>
    <name type="scientific">Neosartorya fischeri (strain ATCC 1020 / DSM 3700 / CBS 544.65 / FGSC A1164 / JCM 1740 / NRRL 181 / WB 181)</name>
    <name type="common">Aspergillus fischerianus</name>
    <dbReference type="NCBI Taxonomy" id="331117"/>
    <lineage>
        <taxon>Eukaryota</taxon>
        <taxon>Fungi</taxon>
        <taxon>Dikarya</taxon>
        <taxon>Ascomycota</taxon>
        <taxon>Pezizomycotina</taxon>
        <taxon>Eurotiomycetes</taxon>
        <taxon>Eurotiomycetidae</taxon>
        <taxon>Eurotiales</taxon>
        <taxon>Aspergillaceae</taxon>
        <taxon>Aspergillus</taxon>
        <taxon>Aspergillus subgen. Fumigati</taxon>
    </lineage>
</organism>
<sequence length="107" mass="11329">MTSRRSQEKSYAEAAAAPPPKEAASSDVTPAVPADVIYKLLGFTAAMVVGPIGMYFITVNSGASSTVAGITAAITANLVLFGYIYVAWLDDREEREAASKKKEKKAQ</sequence>
<protein>
    <recommendedName>
        <fullName evidence="1">Vacuolar ATPase assembly integral membrane protein vma21</fullName>
    </recommendedName>
</protein>
<reference key="1">
    <citation type="journal article" date="2008" name="PLoS Genet.">
        <title>Genomic islands in the pathogenic filamentous fungus Aspergillus fumigatus.</title>
        <authorList>
            <person name="Fedorova N.D."/>
            <person name="Khaldi N."/>
            <person name="Joardar V.S."/>
            <person name="Maiti R."/>
            <person name="Amedeo P."/>
            <person name="Anderson M.J."/>
            <person name="Crabtree J."/>
            <person name="Silva J.C."/>
            <person name="Badger J.H."/>
            <person name="Albarraq A."/>
            <person name="Angiuoli S."/>
            <person name="Bussey H."/>
            <person name="Bowyer P."/>
            <person name="Cotty P.J."/>
            <person name="Dyer P.S."/>
            <person name="Egan A."/>
            <person name="Galens K."/>
            <person name="Fraser-Liggett C.M."/>
            <person name="Haas B.J."/>
            <person name="Inman J.M."/>
            <person name="Kent R."/>
            <person name="Lemieux S."/>
            <person name="Malavazi I."/>
            <person name="Orvis J."/>
            <person name="Roemer T."/>
            <person name="Ronning C.M."/>
            <person name="Sundaram J.P."/>
            <person name="Sutton G."/>
            <person name="Turner G."/>
            <person name="Venter J.C."/>
            <person name="White O.R."/>
            <person name="Whitty B.R."/>
            <person name="Youngman P."/>
            <person name="Wolfe K.H."/>
            <person name="Goldman G.H."/>
            <person name="Wortman J.R."/>
            <person name="Jiang B."/>
            <person name="Denning D.W."/>
            <person name="Nierman W.C."/>
        </authorList>
    </citation>
    <scope>NUCLEOTIDE SEQUENCE [LARGE SCALE GENOMIC DNA]</scope>
    <source>
        <strain>ATCC 1020 / DSM 3700 / CBS 544.65 / FGSC A1164 / JCM 1740 / NRRL 181 / WB 181</strain>
    </source>
</reference>